<name>RSME_RICCN</name>
<organism>
    <name type="scientific">Rickettsia conorii (strain ATCC VR-613 / Malish 7)</name>
    <dbReference type="NCBI Taxonomy" id="272944"/>
    <lineage>
        <taxon>Bacteria</taxon>
        <taxon>Pseudomonadati</taxon>
        <taxon>Pseudomonadota</taxon>
        <taxon>Alphaproteobacteria</taxon>
        <taxon>Rickettsiales</taxon>
        <taxon>Rickettsiaceae</taxon>
        <taxon>Rickettsieae</taxon>
        <taxon>Rickettsia</taxon>
        <taxon>spotted fever group</taxon>
    </lineage>
</organism>
<protein>
    <recommendedName>
        <fullName>Ribosomal RNA small subunit methyltransferase E</fullName>
        <ecNumber>2.1.1.193</ecNumber>
    </recommendedName>
    <alternativeName>
        <fullName>16S rRNA m3U1498 methyltransferase</fullName>
    </alternativeName>
</protein>
<sequence length="244" mass="27437">MKYNRIYINSRLAENSKIELASDHHVHYVKTVLRLKVNDGLRLFNGTDGEFLAQINDIGKNNLSVRLKEQLKKPYTKSTLTLAVAIIKQDKLMLAINMATQLGITKIIPLITRWCQFRSVNIERLTKCVIEATEQSERLTPPIIEKAITIQDYLKKNNNLMLYANEHEKEENSILRISSSLSNSDITIIVGPEGGFTNDELELLASYKNTKSISLGSNILRAETAAITAIAQVRLLGSHCEEIA</sequence>
<keyword id="KW-0963">Cytoplasm</keyword>
<keyword id="KW-0489">Methyltransferase</keyword>
<keyword id="KW-0698">rRNA processing</keyword>
<keyword id="KW-0949">S-adenosyl-L-methionine</keyword>
<keyword id="KW-0808">Transferase</keyword>
<feature type="chain" id="PRO_0000176215" description="Ribosomal RNA small subunit methyltransferase E">
    <location>
        <begin position="1"/>
        <end position="244"/>
    </location>
</feature>
<comment type="function">
    <text evidence="1">Specifically methylates the N3 position of the uracil ring of uridine 1498 (m3U1498) in 16S rRNA. Acts on the fully assembled 30S ribosomal subunit (By similarity).</text>
</comment>
<comment type="catalytic activity">
    <reaction>
        <text>uridine(1498) in 16S rRNA + S-adenosyl-L-methionine = N(3)-methyluridine(1498) in 16S rRNA + S-adenosyl-L-homocysteine + H(+)</text>
        <dbReference type="Rhea" id="RHEA:42920"/>
        <dbReference type="Rhea" id="RHEA-COMP:10283"/>
        <dbReference type="Rhea" id="RHEA-COMP:10284"/>
        <dbReference type="ChEBI" id="CHEBI:15378"/>
        <dbReference type="ChEBI" id="CHEBI:57856"/>
        <dbReference type="ChEBI" id="CHEBI:59789"/>
        <dbReference type="ChEBI" id="CHEBI:65315"/>
        <dbReference type="ChEBI" id="CHEBI:74502"/>
        <dbReference type="EC" id="2.1.1.193"/>
    </reaction>
</comment>
<comment type="subcellular location">
    <subcellularLocation>
        <location evidence="1">Cytoplasm</location>
    </subcellularLocation>
</comment>
<comment type="similarity">
    <text evidence="2">Belongs to the RNA methyltransferase RsmE family.</text>
</comment>
<comment type="sequence caution" evidence="2">
    <conflict type="erroneous initiation">
        <sequence resource="EMBL-CDS" id="AAL02748"/>
    </conflict>
    <text>Extended N-terminus.</text>
</comment>
<evidence type="ECO:0000250" key="1"/>
<evidence type="ECO:0000305" key="2"/>
<reference key="1">
    <citation type="journal article" date="2001" name="Science">
        <title>Mechanisms of evolution in Rickettsia conorii and R. prowazekii.</title>
        <authorList>
            <person name="Ogata H."/>
            <person name="Audic S."/>
            <person name="Renesto-Audiffren P."/>
            <person name="Fournier P.-E."/>
            <person name="Barbe V."/>
            <person name="Samson D."/>
            <person name="Roux V."/>
            <person name="Cossart P."/>
            <person name="Weissenbach J."/>
            <person name="Claverie J.-M."/>
            <person name="Raoult D."/>
        </authorList>
    </citation>
    <scope>NUCLEOTIDE SEQUENCE [LARGE SCALE GENOMIC DNA]</scope>
    <source>
        <strain>ATCC VR-613 / Malish 7</strain>
    </source>
</reference>
<dbReference type="EC" id="2.1.1.193"/>
<dbReference type="EMBL" id="AE006914">
    <property type="protein sequence ID" value="AAL02748.1"/>
    <property type="status" value="ALT_INIT"/>
    <property type="molecule type" value="Genomic_DNA"/>
</dbReference>
<dbReference type="PIR" id="B97726">
    <property type="entry name" value="B97726"/>
</dbReference>
<dbReference type="RefSeq" id="WP_010976876.1">
    <property type="nucleotide sequence ID" value="NC_003103.1"/>
</dbReference>
<dbReference type="SMR" id="Q92J59"/>
<dbReference type="GeneID" id="927981"/>
<dbReference type="KEGG" id="rco:RC0210"/>
<dbReference type="PATRIC" id="fig|272944.4.peg.240"/>
<dbReference type="HOGENOM" id="CLU_067442_4_0_5"/>
<dbReference type="Proteomes" id="UP000000816">
    <property type="component" value="Chromosome"/>
</dbReference>
<dbReference type="GO" id="GO:0005737">
    <property type="term" value="C:cytoplasm"/>
    <property type="evidence" value="ECO:0007669"/>
    <property type="project" value="UniProtKB-SubCell"/>
</dbReference>
<dbReference type="GO" id="GO:0070042">
    <property type="term" value="F:rRNA (uridine-N3-)-methyltransferase activity"/>
    <property type="evidence" value="ECO:0007669"/>
    <property type="project" value="TreeGrafter"/>
</dbReference>
<dbReference type="GO" id="GO:0070475">
    <property type="term" value="P:rRNA base methylation"/>
    <property type="evidence" value="ECO:0007669"/>
    <property type="project" value="TreeGrafter"/>
</dbReference>
<dbReference type="CDD" id="cd18084">
    <property type="entry name" value="RsmE-like"/>
    <property type="match status" value="1"/>
</dbReference>
<dbReference type="Gene3D" id="3.40.1280.10">
    <property type="match status" value="1"/>
</dbReference>
<dbReference type="Gene3D" id="2.40.240.20">
    <property type="entry name" value="Hypothetical PUA domain-like, domain 1"/>
    <property type="match status" value="1"/>
</dbReference>
<dbReference type="InterPro" id="IPR029028">
    <property type="entry name" value="Alpha/beta_knot_MTases"/>
</dbReference>
<dbReference type="InterPro" id="IPR015947">
    <property type="entry name" value="PUA-like_sf"/>
</dbReference>
<dbReference type="InterPro" id="IPR006700">
    <property type="entry name" value="RsmE"/>
</dbReference>
<dbReference type="InterPro" id="IPR046886">
    <property type="entry name" value="RsmE_MTase_dom"/>
</dbReference>
<dbReference type="InterPro" id="IPR046887">
    <property type="entry name" value="RsmE_PUA-like"/>
</dbReference>
<dbReference type="InterPro" id="IPR029026">
    <property type="entry name" value="tRNA_m1G_MTases_N"/>
</dbReference>
<dbReference type="NCBIfam" id="NF008694">
    <property type="entry name" value="PRK11713.3-2"/>
    <property type="match status" value="1"/>
</dbReference>
<dbReference type="NCBIfam" id="TIGR00046">
    <property type="entry name" value="RsmE family RNA methyltransferase"/>
    <property type="match status" value="1"/>
</dbReference>
<dbReference type="PANTHER" id="PTHR30027:SF3">
    <property type="entry name" value="16S RRNA (URACIL(1498)-N(3))-METHYLTRANSFERASE"/>
    <property type="match status" value="1"/>
</dbReference>
<dbReference type="PANTHER" id="PTHR30027">
    <property type="entry name" value="RIBOSOMAL RNA SMALL SUBUNIT METHYLTRANSFERASE E"/>
    <property type="match status" value="1"/>
</dbReference>
<dbReference type="Pfam" id="PF04452">
    <property type="entry name" value="Methyltrans_RNA"/>
    <property type="match status" value="1"/>
</dbReference>
<dbReference type="Pfam" id="PF20260">
    <property type="entry name" value="PUA_4"/>
    <property type="match status" value="1"/>
</dbReference>
<dbReference type="PIRSF" id="PIRSF015601">
    <property type="entry name" value="MTase_slr0722"/>
    <property type="match status" value="1"/>
</dbReference>
<dbReference type="SUPFAM" id="SSF75217">
    <property type="entry name" value="alpha/beta knot"/>
    <property type="match status" value="1"/>
</dbReference>
<dbReference type="SUPFAM" id="SSF88697">
    <property type="entry name" value="PUA domain-like"/>
    <property type="match status" value="1"/>
</dbReference>
<gene>
    <name type="primary">rsmE</name>
    <name type="ordered locus">RC0210</name>
</gene>
<proteinExistence type="inferred from homology"/>
<accession>Q92J59</accession>